<feature type="initiator methionine" description="Removed" evidence="2">
    <location>
        <position position="1"/>
    </location>
</feature>
<feature type="chain" id="PRO_0000211512" description="Charged multivesicular body protein 6">
    <location>
        <begin position="2"/>
        <end position="206"/>
    </location>
</feature>
<feature type="region of interest" description="Disordered" evidence="3">
    <location>
        <begin position="167"/>
        <end position="206"/>
    </location>
</feature>
<feature type="coiled-coil region" evidence="2">
    <location>
        <begin position="11"/>
        <end position="103"/>
    </location>
</feature>
<feature type="short sequence motif" description="Type-2 MIT-interacting motif" evidence="1">
    <location>
        <begin position="170"/>
        <end position="181"/>
    </location>
</feature>
<feature type="compositionally biased region" description="Acidic residues" evidence="3">
    <location>
        <begin position="168"/>
        <end position="185"/>
    </location>
</feature>
<feature type="compositionally biased region" description="Basic and acidic residues" evidence="3">
    <location>
        <begin position="187"/>
        <end position="206"/>
    </location>
</feature>
<feature type="lipid moiety-binding region" description="N-myristoyl glycine" evidence="2">
    <location>
        <position position="2"/>
    </location>
</feature>
<feature type="sequence conflict" description="In Ref. 1; AAT68128." evidence="4" ref="1">
    <original>Q</original>
    <variation>H</variation>
    <location>
        <position position="165"/>
    </location>
</feature>
<comment type="function">
    <text evidence="1">Probable core component of the endosomal sorting required for transport complex III (ESCRT-III) which is involved in multivesicular bodies (MVBs) formation and sorting of endosomal cargo proteins into MVBs. MVBs contain intraluminal vesicles (ILVs) that are generated by invagination and scission from the limiting membrane of the endosome and mostly are delivered to lysosomes enabling degradation of membrane proteins, such as stimulated growth factor receptors, lysosomal enzymes and lipids. In the ESCRT-III complex, it probably serves as an acceptor for the ESCRT-II complex on endosomal membranes (By similarity).</text>
</comment>
<comment type="subunit">
    <text evidence="1">Probable core component of the endosomal sorting required for transport complex III (ESCRT-III). ESCRT-III components are thought to multimerize to form a flat lattice on the perimeter membrane of the endosome (By similarity).</text>
</comment>
<comment type="subcellular location">
    <subcellularLocation>
        <location evidence="1">Endomembrane system</location>
        <topology evidence="1">Lipid-anchor</topology>
    </subcellularLocation>
    <subcellularLocation>
        <location evidence="1">Late endosome membrane</location>
    </subcellularLocation>
</comment>
<comment type="similarity">
    <text evidence="4">Belongs to the SNF7 family.</text>
</comment>
<reference key="1">
    <citation type="journal article" date="2004" name="Proc. Natl. Acad. Sci. U.S.A.">
        <title>Identification of 315 genes essential for early zebrafish development.</title>
        <authorList>
            <person name="Amsterdam A."/>
            <person name="Nissen R.M."/>
            <person name="Sun Z."/>
            <person name="Swindell E.C."/>
            <person name="Farrington S."/>
            <person name="Hopkins N."/>
        </authorList>
    </citation>
    <scope>NUCLEOTIDE SEQUENCE [LARGE SCALE MRNA]</scope>
    <source>
        <tissue>Embryo</tissue>
    </source>
</reference>
<reference key="2">
    <citation type="submission" date="2005-05" db="EMBL/GenBank/DDBJ databases">
        <authorList>
            <consortium name="NIH - Zebrafish Gene Collection (ZGC) project"/>
        </authorList>
    </citation>
    <scope>NUCLEOTIDE SEQUENCE [LARGE SCALE MRNA]</scope>
    <source>
        <strain>AB</strain>
        <tissue>Embryo</tissue>
    </source>
</reference>
<sequence>MGNLFGKKKATRVTEQDRAVLQLKQQRDKLKQYQKRITLQMDKERQLAKQLLKDGKKDKALLLLKKKRYQDQLLEKTENQISNLERMVQDIEFAQIEMKVIEGLKVGNDCLKKMHEVLSIEEVEKIMDETHDAIEYQKQIDEMLAGSLTQEDEEAVLAELEAITQGEADLELPEVPGEELPEVPEQEPVREKERVKKKPEREMVAV</sequence>
<protein>
    <recommendedName>
        <fullName>Charged multivesicular body protein 6</fullName>
    </recommendedName>
    <alternativeName>
        <fullName>Chromatin-modifying protein 6</fullName>
    </alternativeName>
</protein>
<proteinExistence type="evidence at transcript level"/>
<organism>
    <name type="scientific">Danio rerio</name>
    <name type="common">Zebrafish</name>
    <name type="synonym">Brachydanio rerio</name>
    <dbReference type="NCBI Taxonomy" id="7955"/>
    <lineage>
        <taxon>Eukaryota</taxon>
        <taxon>Metazoa</taxon>
        <taxon>Chordata</taxon>
        <taxon>Craniata</taxon>
        <taxon>Vertebrata</taxon>
        <taxon>Euteleostomi</taxon>
        <taxon>Actinopterygii</taxon>
        <taxon>Neopterygii</taxon>
        <taxon>Teleostei</taxon>
        <taxon>Ostariophysi</taxon>
        <taxon>Cypriniformes</taxon>
        <taxon>Danionidae</taxon>
        <taxon>Danioninae</taxon>
        <taxon>Danio</taxon>
    </lineage>
</organism>
<keyword id="KW-0175">Coiled coil</keyword>
<keyword id="KW-0967">Endosome</keyword>
<keyword id="KW-0449">Lipoprotein</keyword>
<keyword id="KW-0472">Membrane</keyword>
<keyword id="KW-0519">Myristate</keyword>
<keyword id="KW-0653">Protein transport</keyword>
<keyword id="KW-1185">Reference proteome</keyword>
<keyword id="KW-0813">Transport</keyword>
<gene>
    <name type="primary">chmp6</name>
    <name type="synonym">chmp6l</name>
</gene>
<dbReference type="EMBL" id="AY648810">
    <property type="protein sequence ID" value="AAT68128.1"/>
    <property type="molecule type" value="mRNA"/>
</dbReference>
<dbReference type="EMBL" id="BC095171">
    <property type="protein sequence ID" value="AAH95171.1"/>
    <property type="molecule type" value="mRNA"/>
</dbReference>
<dbReference type="RefSeq" id="NP_001003874.1">
    <property type="nucleotide sequence ID" value="NM_001003874.1"/>
</dbReference>
<dbReference type="SMR" id="Q503V0"/>
<dbReference type="FunCoup" id="Q503V0">
    <property type="interactions" value="2331"/>
</dbReference>
<dbReference type="STRING" id="7955.ENSDARP00000150680"/>
<dbReference type="PaxDb" id="7955-ENSDARP00000012210"/>
<dbReference type="Ensembl" id="ENSDART00000158043">
    <property type="protein sequence ID" value="ENSDARP00000130680"/>
    <property type="gene ID" value="ENSDARG00000102024"/>
</dbReference>
<dbReference type="Ensembl" id="ENSDART00000181861">
    <property type="protein sequence ID" value="ENSDARP00000150680"/>
    <property type="gene ID" value="ENSDARG00000102024"/>
</dbReference>
<dbReference type="GeneID" id="445397"/>
<dbReference type="KEGG" id="dre:445397"/>
<dbReference type="AGR" id="ZFIN:ZDB-GENE-040924-2"/>
<dbReference type="CTD" id="445397"/>
<dbReference type="ZFIN" id="ZDB-GENE-040924-2">
    <property type="gene designation" value="chmp6b"/>
</dbReference>
<dbReference type="eggNOG" id="KOG2910">
    <property type="taxonomic scope" value="Eukaryota"/>
</dbReference>
<dbReference type="InParanoid" id="Q503V0"/>
<dbReference type="OMA" id="RAKQPAM"/>
<dbReference type="OrthoDB" id="441172at2759"/>
<dbReference type="PhylomeDB" id="Q503V0"/>
<dbReference type="Reactome" id="R-DRE-1632852">
    <property type="pathway name" value="Macroautophagy"/>
</dbReference>
<dbReference type="Reactome" id="R-DRE-917729">
    <property type="pathway name" value="Endosomal Sorting Complex Required For Transport (ESCRT)"/>
</dbReference>
<dbReference type="Reactome" id="R-DRE-9668328">
    <property type="pathway name" value="Sealing of the nuclear envelope (NE) by ESCRT-III"/>
</dbReference>
<dbReference type="PRO" id="PR:Q503V0"/>
<dbReference type="Proteomes" id="UP000000437">
    <property type="component" value="Chromosome 12"/>
</dbReference>
<dbReference type="Bgee" id="ENSDARG00000102024">
    <property type="expression patterns" value="Expressed in muscle tissue and 22 other cell types or tissues"/>
</dbReference>
<dbReference type="ExpressionAtlas" id="Q503V0">
    <property type="expression patterns" value="baseline"/>
</dbReference>
<dbReference type="GO" id="GO:0000815">
    <property type="term" value="C:ESCRT III complex"/>
    <property type="evidence" value="ECO:0000318"/>
    <property type="project" value="GO_Central"/>
</dbReference>
<dbReference type="GO" id="GO:0031902">
    <property type="term" value="C:late endosome membrane"/>
    <property type="evidence" value="ECO:0007669"/>
    <property type="project" value="UniProtKB-SubCell"/>
</dbReference>
<dbReference type="GO" id="GO:0005771">
    <property type="term" value="C:multivesicular body"/>
    <property type="evidence" value="ECO:0000318"/>
    <property type="project" value="GO_Central"/>
</dbReference>
<dbReference type="GO" id="GO:0032511">
    <property type="term" value="P:late endosome to vacuole transport via multivesicular body sorting pathway"/>
    <property type="evidence" value="ECO:0000318"/>
    <property type="project" value="GO_Central"/>
</dbReference>
<dbReference type="GO" id="GO:0015031">
    <property type="term" value="P:protein transport"/>
    <property type="evidence" value="ECO:0007669"/>
    <property type="project" value="UniProtKB-KW"/>
</dbReference>
<dbReference type="GO" id="GO:0006900">
    <property type="term" value="P:vesicle budding from membrane"/>
    <property type="evidence" value="ECO:0000318"/>
    <property type="project" value="GO_Central"/>
</dbReference>
<dbReference type="Gene3D" id="6.10.140.1230">
    <property type="match status" value="1"/>
</dbReference>
<dbReference type="InterPro" id="IPR005024">
    <property type="entry name" value="Snf7_fam"/>
</dbReference>
<dbReference type="PANTHER" id="PTHR22761">
    <property type="entry name" value="CHARGED MULTIVESICULAR BODY PROTEIN"/>
    <property type="match status" value="1"/>
</dbReference>
<dbReference type="PANTHER" id="PTHR22761:SF5">
    <property type="entry name" value="CHARGED MULTIVESICULAR BODY PROTEIN 6"/>
    <property type="match status" value="1"/>
</dbReference>
<dbReference type="Pfam" id="PF03357">
    <property type="entry name" value="Snf7"/>
    <property type="match status" value="1"/>
</dbReference>
<name>CHMP6_DANRE</name>
<accession>Q503V0</accession>
<accession>Q6DRE9</accession>
<evidence type="ECO:0000250" key="1"/>
<evidence type="ECO:0000255" key="2"/>
<evidence type="ECO:0000256" key="3">
    <source>
        <dbReference type="SAM" id="MobiDB-lite"/>
    </source>
</evidence>
<evidence type="ECO:0000305" key="4"/>